<protein>
    <recommendedName>
        <fullName evidence="1">Protein DsrB</fullName>
    </recommendedName>
</protein>
<sequence>MKVNDRVTVKTDGGPRRPGVVLAVEEFSEGTMYLVSLEDYPLGIWFFNESGHQDGIFVEKAEQD</sequence>
<name>DSRB_SALG2</name>
<dbReference type="EMBL" id="AM933173">
    <property type="protein sequence ID" value="CAR36957.1"/>
    <property type="molecule type" value="Genomic_DNA"/>
</dbReference>
<dbReference type="RefSeq" id="WP_000867218.1">
    <property type="nucleotide sequence ID" value="NC_011274.1"/>
</dbReference>
<dbReference type="SMR" id="B5R7E9"/>
<dbReference type="KEGG" id="seg:SG1072"/>
<dbReference type="HOGENOM" id="CLU_189289_0_0_6"/>
<dbReference type="Proteomes" id="UP000008321">
    <property type="component" value="Chromosome"/>
</dbReference>
<dbReference type="HAMAP" id="MF_01549">
    <property type="entry name" value="DsrB"/>
    <property type="match status" value="1"/>
</dbReference>
<dbReference type="InterPro" id="IPR019717">
    <property type="entry name" value="Dextransucrase_DSRB"/>
</dbReference>
<dbReference type="NCBIfam" id="NF007981">
    <property type="entry name" value="PRK10708.1"/>
    <property type="match status" value="1"/>
</dbReference>
<dbReference type="Pfam" id="PF10781">
    <property type="entry name" value="DSRB"/>
    <property type="match status" value="1"/>
</dbReference>
<evidence type="ECO:0000255" key="1">
    <source>
        <dbReference type="HAMAP-Rule" id="MF_01549"/>
    </source>
</evidence>
<accession>B5R7E9</accession>
<gene>
    <name evidence="1" type="primary">dsrB</name>
    <name type="ordered locus">SG1072</name>
</gene>
<feature type="chain" id="PRO_1000146857" description="Protein DsrB">
    <location>
        <begin position="1"/>
        <end position="64"/>
    </location>
</feature>
<proteinExistence type="inferred from homology"/>
<organism>
    <name type="scientific">Salmonella gallinarum (strain 287/91 / NCTC 13346)</name>
    <dbReference type="NCBI Taxonomy" id="550538"/>
    <lineage>
        <taxon>Bacteria</taxon>
        <taxon>Pseudomonadati</taxon>
        <taxon>Pseudomonadota</taxon>
        <taxon>Gammaproteobacteria</taxon>
        <taxon>Enterobacterales</taxon>
        <taxon>Enterobacteriaceae</taxon>
        <taxon>Salmonella</taxon>
    </lineage>
</organism>
<comment type="similarity">
    <text evidence="1">Belongs to the DsrB family.</text>
</comment>
<reference key="1">
    <citation type="journal article" date="2008" name="Genome Res.">
        <title>Comparative genome analysis of Salmonella enteritidis PT4 and Salmonella gallinarum 287/91 provides insights into evolutionary and host adaptation pathways.</title>
        <authorList>
            <person name="Thomson N.R."/>
            <person name="Clayton D.J."/>
            <person name="Windhorst D."/>
            <person name="Vernikos G."/>
            <person name="Davidson S."/>
            <person name="Churcher C."/>
            <person name="Quail M.A."/>
            <person name="Stevens M."/>
            <person name="Jones M.A."/>
            <person name="Watson M."/>
            <person name="Barron A."/>
            <person name="Layton A."/>
            <person name="Pickard D."/>
            <person name="Kingsley R.A."/>
            <person name="Bignell A."/>
            <person name="Clark L."/>
            <person name="Harris B."/>
            <person name="Ormond D."/>
            <person name="Abdellah Z."/>
            <person name="Brooks K."/>
            <person name="Cherevach I."/>
            <person name="Chillingworth T."/>
            <person name="Woodward J."/>
            <person name="Norberczak H."/>
            <person name="Lord A."/>
            <person name="Arrowsmith C."/>
            <person name="Jagels K."/>
            <person name="Moule S."/>
            <person name="Mungall K."/>
            <person name="Saunders M."/>
            <person name="Whitehead S."/>
            <person name="Chabalgoity J.A."/>
            <person name="Maskell D."/>
            <person name="Humphreys T."/>
            <person name="Roberts M."/>
            <person name="Barrow P.A."/>
            <person name="Dougan G."/>
            <person name="Parkhill J."/>
        </authorList>
    </citation>
    <scope>NUCLEOTIDE SEQUENCE [LARGE SCALE GENOMIC DNA]</scope>
    <source>
        <strain>287/91 / NCTC 13346</strain>
    </source>
</reference>